<organism>
    <name type="scientific">Hydrophylax bahuvistara</name>
    <name type="common">Wide-spread fungoid frog</name>
    <dbReference type="NCBI Taxonomy" id="1690667"/>
    <lineage>
        <taxon>Eukaryota</taxon>
        <taxon>Metazoa</taxon>
        <taxon>Chordata</taxon>
        <taxon>Craniata</taxon>
        <taxon>Vertebrata</taxon>
        <taxon>Euteleostomi</taxon>
        <taxon>Amphibia</taxon>
        <taxon>Batrachia</taxon>
        <taxon>Anura</taxon>
        <taxon>Neobatrachia</taxon>
        <taxon>Ranoidea</taxon>
        <taxon>Ranidae</taxon>
        <taxon>Hydrophylax</taxon>
    </lineage>
</organism>
<sequence length="27" mass="2961">IPLRGAFINGRWDSQCHRFSNGAIACA</sequence>
<dbReference type="GO" id="GO:0005576">
    <property type="term" value="C:extracellular region"/>
    <property type="evidence" value="ECO:0007669"/>
    <property type="project" value="UniProtKB-SubCell"/>
</dbReference>
<dbReference type="GO" id="GO:0006952">
    <property type="term" value="P:defense response"/>
    <property type="evidence" value="ECO:0007669"/>
    <property type="project" value="UniProtKB-KW"/>
</dbReference>
<dbReference type="GO" id="GO:0050688">
    <property type="term" value="P:regulation of defense response to virus"/>
    <property type="evidence" value="ECO:0007669"/>
    <property type="project" value="UniProtKB-KW"/>
</dbReference>
<evidence type="ECO:0000269" key="1">
    <source>
    </source>
</evidence>
<evidence type="ECO:0000303" key="2">
    <source>
    </source>
</evidence>
<evidence type="ECO:0000305" key="3">
    <source>
    </source>
</evidence>
<comment type="function">
    <text evidence="1">Amphibian peptide that shows viricidal activity against human H1N1 influenza A virus. It specifically targets the conserved stalk region of H1 hemagglutinin, and acts by actively destroying influenza virions. It shows a reduced activity on human H3N2 influenza A virus and no activity against other viruses (HIV, SIV, HSV-II, hepatitis C, Ebola, Zika, and Dengue viruses). In vivo, the peptide also protects mice infected with mouse-adapted influenza virus from lethal influenza infection. The peptide synthesized in D-amino acids is inactive.</text>
</comment>
<comment type="subcellular location">
    <subcellularLocation>
        <location evidence="1">Secreted</location>
    </subcellularLocation>
</comment>
<comment type="tissue specificity">
    <text evidence="3">Expressed by the skin glands.</text>
</comment>
<comment type="pharmaceutical">
    <text evidence="3">Could contribute to first-line antiviral treatments during outbreaks of flu, particularly as host defense peptides are less prone to resistance than conventional drug therapies.</text>
</comment>
<comment type="miscellaneous">
    <text evidence="3">The name urumin is given by authors from the word 'urumi', which is a deadly whip sword that originates from the same geographical region as H.bahuvistara.</text>
</comment>
<comment type="online information" name="The antimicrobial peptide database">
    <link uri="https://wangapd3.com/database/query_output.php?ID=02846"/>
</comment>
<proteinExistence type="evidence at protein level"/>
<accession>P0DTB9</accession>
<protein>
    <recommendedName>
        <fullName evidence="2">Urumin</fullName>
    </recommendedName>
    <alternativeName>
        <fullName evidence="2">Host defense peptide</fullName>
        <shortName evidence="2">HDP</shortName>
    </alternativeName>
</protein>
<feature type="peptide" id="PRO_0000449323" description="Urumin">
    <location>
        <begin position="1"/>
        <end position="27"/>
    </location>
</feature>
<feature type="mutagenesis site" description="Decrease in antiviral activity." evidence="1">
    <original>P</original>
    <variation>A</variation>
    <location>
        <position position="2"/>
    </location>
</feature>
<feature type="mutagenesis site" description="Decrease in antiviral activity." evidence="1">
    <original>F</original>
    <variation>A</variation>
    <location>
        <position position="7"/>
    </location>
</feature>
<feature type="mutagenesis site" description="Decrease in antiviral activity." evidence="1">
    <original>R</original>
    <variation>A</variation>
    <location>
        <position position="11"/>
    </location>
</feature>
<feature type="mutagenesis site" description="Decrease in antiviral activity." evidence="1">
    <original>W</original>
    <variation>A</variation>
    <location>
        <position position="12"/>
    </location>
</feature>
<feature type="mutagenesis site" description="Decrease in antiviral activity." evidence="1">
    <original>D</original>
    <variation>A</variation>
    <location>
        <position position="13"/>
    </location>
</feature>
<feature type="mutagenesis site" description="Decrease in antiviral activity." evidence="1">
    <original>Q</original>
    <variation>A</variation>
    <location>
        <position position="15"/>
    </location>
</feature>
<feature type="mutagenesis site" description="Decrease in antiviral activity." evidence="1">
    <original>C</original>
    <variation>A</variation>
    <location>
        <position position="16"/>
    </location>
</feature>
<feature type="mutagenesis site" description="Decrease in antiviral activity." evidence="1">
    <original>H</original>
    <variation>A</variation>
    <location>
        <position position="17"/>
    </location>
</feature>
<feature type="mutagenesis site" description="Decrease in antiviral activity." evidence="1">
    <original>F</original>
    <variation>A</variation>
    <location>
        <position position="19"/>
    </location>
</feature>
<feature type="mutagenesis site" description="Decrease in antiviral activity." evidence="1">
    <original>S</original>
    <variation>A</variation>
    <location>
        <position position="20"/>
    </location>
</feature>
<feature type="mutagenesis site" description="Decrease in antiviral activity." evidence="1">
    <original>N</original>
    <variation>A</variation>
    <location>
        <position position="21"/>
    </location>
</feature>
<feature type="mutagenesis site" description="Decrease in antiviral activity." evidence="1">
    <original>I</original>
    <variation>A</variation>
    <location>
        <position position="24"/>
    </location>
</feature>
<feature type="mutagenesis site" description="Decrease in antiviral activity." evidence="1">
    <original>C</original>
    <variation>A</variation>
    <location>
        <position position="26"/>
    </location>
</feature>
<keyword id="KW-0878">Amphibian defense peptide</keyword>
<keyword id="KW-0930">Antiviral protein</keyword>
<keyword id="KW-0903">Direct protein sequencing</keyword>
<keyword id="KW-0582">Pharmaceutical</keyword>
<keyword id="KW-0964">Secreted</keyword>
<reference key="1">
    <citation type="journal article" date="2017" name="Immunity">
        <title>An amphibian host defense peptide is virucidal for human H1 hemagglutinin-bearing influenza viruses.</title>
        <authorList>
            <person name="Holthausen D.J."/>
            <person name="Lee S.H."/>
            <person name="Kumar V.T."/>
            <person name="Bouvier N.M."/>
            <person name="Krammer F."/>
            <person name="Ellebedy A.H."/>
            <person name="Wrammert J."/>
            <person name="Lowen A.C."/>
            <person name="George S."/>
            <person name="Pillai M.R."/>
            <person name="Jacob J."/>
        </authorList>
    </citation>
    <scope>PROTEIN SEQUENCE</scope>
    <scope>FUNCTION</scope>
    <scope>SYNTHESIS</scope>
    <scope>MUTAGENESIS OF PRO-2; PHE-7; ARG-11; TRP-12; ASP-13; GLN-15; CYS-16; HIS-17; PHE-19; SER-20; ASN-21; ILE-24 AND CYS-26</scope>
    <scope>PHARMACEUTICAL</scope>
    <source>
        <tissue>Skin secretion</tissue>
    </source>
</reference>
<name>URUM_HYDBH</name>